<comment type="function">
    <text evidence="3">Monooxygenase involved in the biosynthesis of curare monoterpene indole alkaloids (MIAs), natural products such as strychnine, a neurotoxic compound used as a pesticide to control rodents, and its pharmacologically active derivatives, including brucine, used to regulate blood pressure (PubMed:35794473). Curare alkaloids act as animal glycine receptor antagonists (PubMed:35794473). Catalyzes the conversion of beta-colubrine to 11-deMe brucine (PubMed:35794473).</text>
</comment>
<comment type="catalytic activity">
    <reaction evidence="3">
        <text>beta-colubrine + reduced [NADPH--hemoprotein reductase] + O2 = 11-demethylbrucine + oxidized [NADPH--hemoprotein reductase] + H2O + H(+)</text>
        <dbReference type="Rhea" id="RHEA:80939"/>
        <dbReference type="Rhea" id="RHEA-COMP:11964"/>
        <dbReference type="Rhea" id="RHEA-COMP:11965"/>
        <dbReference type="ChEBI" id="CHEBI:15377"/>
        <dbReference type="ChEBI" id="CHEBI:15378"/>
        <dbReference type="ChEBI" id="CHEBI:15379"/>
        <dbReference type="ChEBI" id="CHEBI:57618"/>
        <dbReference type="ChEBI" id="CHEBI:58210"/>
        <dbReference type="ChEBI" id="CHEBI:231755"/>
        <dbReference type="ChEBI" id="CHEBI:231756"/>
        <dbReference type="EC" id="1.14.14.190"/>
    </reaction>
    <physiologicalReaction direction="left-to-right" evidence="3">
        <dbReference type="Rhea" id="RHEA:80940"/>
    </physiologicalReaction>
</comment>
<comment type="cofactor">
    <cofactor evidence="1">
        <name>heme</name>
        <dbReference type="ChEBI" id="CHEBI:30413"/>
    </cofactor>
</comment>
<comment type="pathway">
    <text evidence="3">Alkaloid biosynthesis.</text>
</comment>
<comment type="subcellular location">
    <subcellularLocation>
        <location evidence="2">Membrane</location>
        <topology evidence="2">Single-pass membrane protein</topology>
    </subcellularLocation>
</comment>
<comment type="similarity">
    <text evidence="5">Belongs to the cytochrome P450 family.</text>
</comment>
<accession>P0DO87</accession>
<protein>
    <recommendedName>
        <fullName evidence="4">Strychnine-11-hydroxylase</fullName>
        <shortName evidence="4">Snv11H</shortName>
        <ecNumber evidence="3">1.14.14.190</ecNumber>
    </recommendedName>
    <alternativeName>
        <fullName evidence="4">CYP450 monooxygenase 11H</fullName>
    </alternativeName>
    <alternativeName>
        <fullName evidence="4">Cytochrome P450 11H</fullName>
    </alternativeName>
</protein>
<dbReference type="EC" id="1.14.14.190" evidence="3"/>
<dbReference type="EMBL" id="OM304298">
    <property type="protein sequence ID" value="UQZ09629.1"/>
    <property type="molecule type" value="mRNA"/>
</dbReference>
<dbReference type="SMR" id="P0DO87"/>
<dbReference type="KEGG" id="ag:UQZ09629"/>
<dbReference type="GO" id="GO:0016020">
    <property type="term" value="C:membrane"/>
    <property type="evidence" value="ECO:0007669"/>
    <property type="project" value="UniProtKB-SubCell"/>
</dbReference>
<dbReference type="GO" id="GO:0020037">
    <property type="term" value="F:heme binding"/>
    <property type="evidence" value="ECO:0007669"/>
    <property type="project" value="InterPro"/>
</dbReference>
<dbReference type="GO" id="GO:0005506">
    <property type="term" value="F:iron ion binding"/>
    <property type="evidence" value="ECO:0007669"/>
    <property type="project" value="InterPro"/>
</dbReference>
<dbReference type="GO" id="GO:0004497">
    <property type="term" value="F:monooxygenase activity"/>
    <property type="evidence" value="ECO:0000314"/>
    <property type="project" value="UniProtKB"/>
</dbReference>
<dbReference type="GO" id="GO:0016705">
    <property type="term" value="F:oxidoreductase activity, acting on paired donors, with incorporation or reduction of molecular oxygen"/>
    <property type="evidence" value="ECO:0007669"/>
    <property type="project" value="InterPro"/>
</dbReference>
<dbReference type="GO" id="GO:0009821">
    <property type="term" value="P:alkaloid biosynthetic process"/>
    <property type="evidence" value="ECO:0000314"/>
    <property type="project" value="UniProtKB"/>
</dbReference>
<dbReference type="CDD" id="cd11072">
    <property type="entry name" value="CYP71-like"/>
    <property type="match status" value="1"/>
</dbReference>
<dbReference type="FunFam" id="1.10.630.10:FF:000011">
    <property type="entry name" value="Cytochrome P450 83B1"/>
    <property type="match status" value="1"/>
</dbReference>
<dbReference type="Gene3D" id="1.10.630.10">
    <property type="entry name" value="Cytochrome P450"/>
    <property type="match status" value="1"/>
</dbReference>
<dbReference type="InterPro" id="IPR001128">
    <property type="entry name" value="Cyt_P450"/>
</dbReference>
<dbReference type="InterPro" id="IPR017972">
    <property type="entry name" value="Cyt_P450_CS"/>
</dbReference>
<dbReference type="InterPro" id="IPR002401">
    <property type="entry name" value="Cyt_P450_E_grp-I"/>
</dbReference>
<dbReference type="InterPro" id="IPR036396">
    <property type="entry name" value="Cyt_P450_sf"/>
</dbReference>
<dbReference type="PANTHER" id="PTHR47955:SF19">
    <property type="entry name" value="CYTOCHROME P450 71A9-LIKE ISOFORM X1"/>
    <property type="match status" value="1"/>
</dbReference>
<dbReference type="PANTHER" id="PTHR47955">
    <property type="entry name" value="CYTOCHROME P450 FAMILY 71 PROTEIN"/>
    <property type="match status" value="1"/>
</dbReference>
<dbReference type="Pfam" id="PF00067">
    <property type="entry name" value="p450"/>
    <property type="match status" value="1"/>
</dbReference>
<dbReference type="PRINTS" id="PR00463">
    <property type="entry name" value="EP450I"/>
</dbReference>
<dbReference type="PRINTS" id="PR00385">
    <property type="entry name" value="P450"/>
</dbReference>
<dbReference type="SUPFAM" id="SSF48264">
    <property type="entry name" value="Cytochrome P450"/>
    <property type="match status" value="1"/>
</dbReference>
<dbReference type="PROSITE" id="PS00086">
    <property type="entry name" value="CYTOCHROME_P450"/>
    <property type="match status" value="1"/>
</dbReference>
<organism>
    <name type="scientific">Strychnos nux-vomica</name>
    <name type="common">Poison nut</name>
    <name type="synonym">Strychnine tree</name>
    <dbReference type="NCBI Taxonomy" id="28545"/>
    <lineage>
        <taxon>Eukaryota</taxon>
        <taxon>Viridiplantae</taxon>
        <taxon>Streptophyta</taxon>
        <taxon>Embryophyta</taxon>
        <taxon>Tracheophyta</taxon>
        <taxon>Spermatophyta</taxon>
        <taxon>Magnoliopsida</taxon>
        <taxon>eudicotyledons</taxon>
        <taxon>Gunneridae</taxon>
        <taxon>Pentapetalae</taxon>
        <taxon>asterids</taxon>
        <taxon>lamiids</taxon>
        <taxon>Gentianales</taxon>
        <taxon>Loganiaceae</taxon>
        <taxon>Strychnos</taxon>
    </lineage>
</organism>
<keyword id="KW-0349">Heme</keyword>
<keyword id="KW-0408">Iron</keyword>
<keyword id="KW-0472">Membrane</keyword>
<keyword id="KW-0479">Metal-binding</keyword>
<keyword id="KW-0503">Monooxygenase</keyword>
<keyword id="KW-0560">Oxidoreductase</keyword>
<keyword id="KW-0812">Transmembrane</keyword>
<keyword id="KW-1133">Transmembrane helix</keyword>
<proteinExistence type="evidence at protein level"/>
<sequence length="508" mass="57090">MHSAMSFLLLFSLCFLIHCFVFLLIKKKKAKTMDAKTVPPGPKKLPIIGNLHQLGKLPHRSLRCLSNEYGPLMLMQLGSVPALVVSSADTAREVFKRHDLAFSGRPAFYVAKKLTYDYSDITLAPYGEYWREVKKILVLELLSAKKVQSFEAIRDEEVARMVNFIARSSNPVNLSRLALSLSNNVICRIAFGKISGYEDGSEAKSKFEDIFHETEDFFGTVNIADFFPALSWINKFNGVETRLKENFKKLDSFLNQVIEEHLDSRRSKTEKEDIVDALLRIQGNPNETITLSSENIKGILVTVLLGGSDTSTAVLVWTMAELMRNPMVRRKAQQEVREIIKGQGKVGESDLSRLEYLKLIIKESLRLHPPGPLLIPRETIECCTIEGYKIPAKTRVFINAAAIATDSKVWENPYAFKPERFMDKTVDFKGEDFEMLPFGAGRRGCPGMNFAVPLIGLALANLLLQFDWKLPEGMIAEDLEMEEAPGITVHKKIPLCLVASPNRCAAQD</sequence>
<reference key="1">
    <citation type="journal article" date="2022" name="Nature">
        <title>Biosynthesis of strychnine.</title>
        <authorList>
            <person name="Hong B."/>
            <person name="Grzech D."/>
            <person name="Caputi L."/>
            <person name="Sonawane P."/>
            <person name="Lopez C.E.R."/>
            <person name="Kamileen M.O."/>
            <person name="Hernandez Lozada N.J."/>
            <person name="Grabe V."/>
            <person name="O'Connor S.E."/>
        </authorList>
    </citation>
    <scope>NUCLEOTIDE SEQUENCE [MRNA]</scope>
    <scope>FUNCTION</scope>
    <scope>CATALYTIC ACTIVITY</scope>
    <scope>PATHWAY</scope>
</reference>
<gene>
    <name evidence="4" type="primary">11H</name>
</gene>
<feature type="chain" id="PRO_0000461117" description="Strychnine-11-hydroxylase">
    <location>
        <begin position="1"/>
        <end position="508"/>
    </location>
</feature>
<feature type="transmembrane region" description="Helical" evidence="2">
    <location>
        <begin position="5"/>
        <end position="25"/>
    </location>
</feature>
<feature type="binding site" description="axial binding residue" evidence="1">
    <location>
        <position position="445"/>
    </location>
    <ligand>
        <name>heme</name>
        <dbReference type="ChEBI" id="CHEBI:30413"/>
    </ligand>
    <ligandPart>
        <name>Fe</name>
        <dbReference type="ChEBI" id="CHEBI:18248"/>
    </ligandPart>
</feature>
<name>11H_STRNX</name>
<evidence type="ECO:0000250" key="1">
    <source>
        <dbReference type="UniProtKB" id="Q96242"/>
    </source>
</evidence>
<evidence type="ECO:0000255" key="2"/>
<evidence type="ECO:0000269" key="3">
    <source>
    </source>
</evidence>
<evidence type="ECO:0000303" key="4">
    <source>
    </source>
</evidence>
<evidence type="ECO:0000305" key="5"/>